<comment type="function">
    <text evidence="3">Myosins are actin-based motor molecules with ATPase activity essential for muscle contraction.</text>
</comment>
<comment type="subunit">
    <text evidence="6 12">Muscle myosin is a hexameric protein that consists of 2 heavy chain subunits (MHC), 2 alkali light chain subunits (MLC) and 2 regulatory light chain subunits (MLC-2) (Probable). Interacts with GCSAM (By similarity).</text>
</comment>
<comment type="subcellular location">
    <subcellularLocation>
        <location evidence="2">Cytoplasm</location>
        <location evidence="2">Myofibril</location>
    </subcellularLocation>
    <text evidence="1">Thick filaments of the myofibrils.</text>
</comment>
<comment type="domain">
    <text>The rodlike tail sequence is highly repetitive, showing cycles of a 28-residue repeat pattern composed of 4 heptapeptides, characteristic for alpha-helical coiled coils.</text>
</comment>
<comment type="domain">
    <text evidence="12">Limited proteolysis of myosin heavy chain produces 1 light meromyosin (LMM) and 1 heavy meromyosin (HMM). HMM can be further cleaved into 2 globular subfragments (S1) and 1 rod-shaped subfragment (S2).</text>
</comment>
<comment type="similarity">
    <text evidence="12">Belongs to the TRAFAC class myosin-kinesin ATPase superfamily. Myosin family.</text>
</comment>
<comment type="caution">
    <text evidence="12">Represents a conventional myosin. This protein should not be confused with the unconventional myosin-2 (MYO2) found in fungi.</text>
</comment>
<dbReference type="EMBL" id="AB025260">
    <property type="protein sequence ID" value="BAA82144.1"/>
    <property type="molecule type" value="mRNA"/>
</dbReference>
<dbReference type="RefSeq" id="NP_999301.1">
    <property type="nucleotide sequence ID" value="NM_214136.1"/>
</dbReference>
<dbReference type="SMR" id="Q9TV63"/>
<dbReference type="BioGRID" id="1149388">
    <property type="interactions" value="1"/>
</dbReference>
<dbReference type="FunCoup" id="Q9TV63">
    <property type="interactions" value="1"/>
</dbReference>
<dbReference type="STRING" id="9823.ENSSSCP00000049395"/>
<dbReference type="BindingDB" id="Q9TV63"/>
<dbReference type="ChEMBL" id="CHEMBL4680041"/>
<dbReference type="PaxDb" id="9823-ENSSSCP00000019078"/>
<dbReference type="PeptideAtlas" id="Q9TV63"/>
<dbReference type="ABCD" id="Q9TV63">
    <property type="antibodies" value="1 sequenced antibody"/>
</dbReference>
<dbReference type="GeneID" id="397256"/>
<dbReference type="KEGG" id="ssc:397256"/>
<dbReference type="CTD" id="4620"/>
<dbReference type="eggNOG" id="KOG0161">
    <property type="taxonomic scope" value="Eukaryota"/>
</dbReference>
<dbReference type="InParanoid" id="Q9TV63"/>
<dbReference type="OrthoDB" id="312459at2759"/>
<dbReference type="Proteomes" id="UP000008227">
    <property type="component" value="Unplaced"/>
</dbReference>
<dbReference type="Proteomes" id="UP000314985">
    <property type="component" value="Unplaced"/>
</dbReference>
<dbReference type="Proteomes" id="UP000694570">
    <property type="component" value="Unplaced"/>
</dbReference>
<dbReference type="Proteomes" id="UP000694571">
    <property type="component" value="Unplaced"/>
</dbReference>
<dbReference type="Proteomes" id="UP000694720">
    <property type="component" value="Unplaced"/>
</dbReference>
<dbReference type="Proteomes" id="UP000694722">
    <property type="component" value="Unplaced"/>
</dbReference>
<dbReference type="Proteomes" id="UP000694723">
    <property type="component" value="Unplaced"/>
</dbReference>
<dbReference type="Proteomes" id="UP000694724">
    <property type="component" value="Unplaced"/>
</dbReference>
<dbReference type="Proteomes" id="UP000694725">
    <property type="component" value="Unplaced"/>
</dbReference>
<dbReference type="Proteomes" id="UP000694726">
    <property type="component" value="Unplaced"/>
</dbReference>
<dbReference type="Proteomes" id="UP000694727">
    <property type="component" value="Unplaced"/>
</dbReference>
<dbReference type="Proteomes" id="UP000694728">
    <property type="component" value="Unplaced"/>
</dbReference>
<dbReference type="GO" id="GO:0005737">
    <property type="term" value="C:cytoplasm"/>
    <property type="evidence" value="ECO:0000318"/>
    <property type="project" value="GO_Central"/>
</dbReference>
<dbReference type="GO" id="GO:0030016">
    <property type="term" value="C:myofibril"/>
    <property type="evidence" value="ECO:0007669"/>
    <property type="project" value="UniProtKB-SubCell"/>
</dbReference>
<dbReference type="GO" id="GO:0032982">
    <property type="term" value="C:myosin filament"/>
    <property type="evidence" value="ECO:0000318"/>
    <property type="project" value="GO_Central"/>
</dbReference>
<dbReference type="GO" id="GO:0016460">
    <property type="term" value="C:myosin II complex"/>
    <property type="evidence" value="ECO:0000318"/>
    <property type="project" value="GO_Central"/>
</dbReference>
<dbReference type="GO" id="GO:0051015">
    <property type="term" value="F:actin filament binding"/>
    <property type="evidence" value="ECO:0000318"/>
    <property type="project" value="GO_Central"/>
</dbReference>
<dbReference type="GO" id="GO:0005524">
    <property type="term" value="F:ATP binding"/>
    <property type="evidence" value="ECO:0007669"/>
    <property type="project" value="UniProtKB-KW"/>
</dbReference>
<dbReference type="GO" id="GO:0005516">
    <property type="term" value="F:calmodulin binding"/>
    <property type="evidence" value="ECO:0007669"/>
    <property type="project" value="UniProtKB-KW"/>
</dbReference>
<dbReference type="GO" id="GO:0000146">
    <property type="term" value="F:microfilament motor activity"/>
    <property type="evidence" value="ECO:0000318"/>
    <property type="project" value="GO_Central"/>
</dbReference>
<dbReference type="GO" id="GO:0006936">
    <property type="term" value="P:muscle contraction"/>
    <property type="evidence" value="ECO:0000318"/>
    <property type="project" value="GO_Central"/>
</dbReference>
<dbReference type="FunFam" id="1.10.10.820:FF:000001">
    <property type="entry name" value="Myosin heavy chain"/>
    <property type="match status" value="1"/>
</dbReference>
<dbReference type="FunFam" id="1.20.5.340:FF:000002">
    <property type="entry name" value="Myosin heavy chain"/>
    <property type="match status" value="1"/>
</dbReference>
<dbReference type="FunFam" id="1.20.5.340:FF:000003">
    <property type="entry name" value="Myosin heavy chain"/>
    <property type="match status" value="1"/>
</dbReference>
<dbReference type="FunFam" id="1.20.5.340:FF:000004">
    <property type="entry name" value="Myosin heavy chain"/>
    <property type="match status" value="1"/>
</dbReference>
<dbReference type="FunFam" id="1.20.5.340:FF:000006">
    <property type="entry name" value="Myosin heavy chain"/>
    <property type="match status" value="1"/>
</dbReference>
<dbReference type="FunFam" id="1.20.5.340:FF:000013">
    <property type="entry name" value="Myosin heavy chain"/>
    <property type="match status" value="1"/>
</dbReference>
<dbReference type="FunFam" id="1.20.5.370:FF:000001">
    <property type="entry name" value="Myosin heavy chain"/>
    <property type="match status" value="1"/>
</dbReference>
<dbReference type="FunFam" id="1.20.5.370:FF:000002">
    <property type="entry name" value="Myosin heavy chain"/>
    <property type="match status" value="1"/>
</dbReference>
<dbReference type="FunFam" id="1.20.5.370:FF:000003">
    <property type="entry name" value="Myosin heavy chain"/>
    <property type="match status" value="1"/>
</dbReference>
<dbReference type="FunFam" id="1.20.5.370:FF:000007">
    <property type="entry name" value="Myosin heavy chain"/>
    <property type="match status" value="1"/>
</dbReference>
<dbReference type="FunFam" id="1.20.5.370:FF:000008">
    <property type="entry name" value="Myosin heavy chain"/>
    <property type="match status" value="1"/>
</dbReference>
<dbReference type="FunFam" id="1.20.5.4820:FF:000001">
    <property type="entry name" value="Myosin heavy chain"/>
    <property type="match status" value="1"/>
</dbReference>
<dbReference type="FunFam" id="1.20.58.530:FF:000001">
    <property type="entry name" value="Myosin heavy chain"/>
    <property type="match status" value="1"/>
</dbReference>
<dbReference type="FunFam" id="2.30.30.360:FF:000001">
    <property type="entry name" value="Myosin heavy chain"/>
    <property type="match status" value="1"/>
</dbReference>
<dbReference type="FunFam" id="3.40.850.10:FF:000024">
    <property type="entry name" value="Myosin heavy chain, isoform J"/>
    <property type="match status" value="1"/>
</dbReference>
<dbReference type="FunFam" id="1.20.120.720:FF:000001">
    <property type="entry name" value="Myosin heavy chain, muscle"/>
    <property type="match status" value="1"/>
</dbReference>
<dbReference type="Gene3D" id="1.10.10.820">
    <property type="match status" value="1"/>
</dbReference>
<dbReference type="Gene3D" id="1.20.5.340">
    <property type="match status" value="5"/>
</dbReference>
<dbReference type="Gene3D" id="1.20.5.370">
    <property type="match status" value="4"/>
</dbReference>
<dbReference type="Gene3D" id="1.20.5.4820">
    <property type="match status" value="1"/>
</dbReference>
<dbReference type="Gene3D" id="1.20.58.530">
    <property type="match status" value="1"/>
</dbReference>
<dbReference type="Gene3D" id="6.10.250.2420">
    <property type="match status" value="1"/>
</dbReference>
<dbReference type="Gene3D" id="3.40.850.10">
    <property type="entry name" value="Kinesin motor domain"/>
    <property type="match status" value="1"/>
</dbReference>
<dbReference type="Gene3D" id="2.30.30.360">
    <property type="entry name" value="Myosin S1 fragment, N-terminal"/>
    <property type="match status" value="1"/>
</dbReference>
<dbReference type="Gene3D" id="1.20.120.720">
    <property type="entry name" value="Myosin VI head, motor domain, U50 subdomain"/>
    <property type="match status" value="1"/>
</dbReference>
<dbReference type="InterPro" id="IPR000048">
    <property type="entry name" value="IQ_motif_EF-hand-BS"/>
</dbReference>
<dbReference type="InterPro" id="IPR036961">
    <property type="entry name" value="Kinesin_motor_dom_sf"/>
</dbReference>
<dbReference type="InterPro" id="IPR001609">
    <property type="entry name" value="Myosin_head_motor_dom-like"/>
</dbReference>
<dbReference type="InterPro" id="IPR004009">
    <property type="entry name" value="Myosin_N"/>
</dbReference>
<dbReference type="InterPro" id="IPR008989">
    <property type="entry name" value="Myosin_S1_N"/>
</dbReference>
<dbReference type="InterPro" id="IPR002928">
    <property type="entry name" value="Myosin_tail"/>
</dbReference>
<dbReference type="InterPro" id="IPR027417">
    <property type="entry name" value="P-loop_NTPase"/>
</dbReference>
<dbReference type="InterPro" id="IPR014751">
    <property type="entry name" value="XRCC4-like_C"/>
</dbReference>
<dbReference type="PANTHER" id="PTHR45615">
    <property type="entry name" value="MYOSIN HEAVY CHAIN, NON-MUSCLE"/>
    <property type="match status" value="1"/>
</dbReference>
<dbReference type="PANTHER" id="PTHR45615:SF39">
    <property type="entry name" value="MYOSIN-2"/>
    <property type="match status" value="1"/>
</dbReference>
<dbReference type="Pfam" id="PF00063">
    <property type="entry name" value="Myosin_head"/>
    <property type="match status" value="1"/>
</dbReference>
<dbReference type="Pfam" id="PF02736">
    <property type="entry name" value="Myosin_N"/>
    <property type="match status" value="1"/>
</dbReference>
<dbReference type="Pfam" id="PF01576">
    <property type="entry name" value="Myosin_tail_1"/>
    <property type="match status" value="1"/>
</dbReference>
<dbReference type="PRINTS" id="PR00193">
    <property type="entry name" value="MYOSINHEAVY"/>
</dbReference>
<dbReference type="SMART" id="SM00015">
    <property type="entry name" value="IQ"/>
    <property type="match status" value="2"/>
</dbReference>
<dbReference type="SMART" id="SM00242">
    <property type="entry name" value="MYSc"/>
    <property type="match status" value="1"/>
</dbReference>
<dbReference type="SUPFAM" id="SSF90257">
    <property type="entry name" value="Myosin rod fragments"/>
    <property type="match status" value="5"/>
</dbReference>
<dbReference type="SUPFAM" id="SSF52540">
    <property type="entry name" value="P-loop containing nucleoside triphosphate hydrolases"/>
    <property type="match status" value="1"/>
</dbReference>
<dbReference type="SUPFAM" id="SSF57997">
    <property type="entry name" value="Tropomyosin"/>
    <property type="match status" value="1"/>
</dbReference>
<dbReference type="PROSITE" id="PS50096">
    <property type="entry name" value="IQ"/>
    <property type="match status" value="1"/>
</dbReference>
<dbReference type="PROSITE" id="PS51456">
    <property type="entry name" value="MYOSIN_MOTOR"/>
    <property type="match status" value="1"/>
</dbReference>
<dbReference type="PROSITE" id="PS51844">
    <property type="entry name" value="SH3_LIKE"/>
    <property type="match status" value="1"/>
</dbReference>
<proteinExistence type="evidence at transcript level"/>
<organism>
    <name type="scientific">Sus scrofa</name>
    <name type="common">Pig</name>
    <dbReference type="NCBI Taxonomy" id="9823"/>
    <lineage>
        <taxon>Eukaryota</taxon>
        <taxon>Metazoa</taxon>
        <taxon>Chordata</taxon>
        <taxon>Craniata</taxon>
        <taxon>Vertebrata</taxon>
        <taxon>Euteleostomi</taxon>
        <taxon>Mammalia</taxon>
        <taxon>Eutheria</taxon>
        <taxon>Laurasiatheria</taxon>
        <taxon>Artiodactyla</taxon>
        <taxon>Suina</taxon>
        <taxon>Suidae</taxon>
        <taxon>Sus</taxon>
    </lineage>
</organism>
<gene>
    <name type="primary">MYH2</name>
</gene>
<feature type="chain" id="PRO_0000274168" description="Myosin-2">
    <location>
        <begin position="1"/>
        <end position="1939"/>
    </location>
</feature>
<feature type="domain" description="Myosin N-terminal SH3-like" evidence="10">
    <location>
        <begin position="33"/>
        <end position="82"/>
    </location>
</feature>
<feature type="domain" description="Myosin motor" evidence="9">
    <location>
        <begin position="86"/>
        <end position="782"/>
    </location>
</feature>
<feature type="domain" description="IQ" evidence="8">
    <location>
        <begin position="785"/>
        <end position="814"/>
    </location>
</feature>
<feature type="region of interest" description="Actin-binding" evidence="1">
    <location>
        <begin position="659"/>
        <end position="681"/>
    </location>
</feature>
<feature type="region of interest" description="Actin-binding" evidence="1">
    <location>
        <begin position="761"/>
        <end position="775"/>
    </location>
</feature>
<feature type="region of interest" description="Disordered" evidence="11">
    <location>
        <begin position="1126"/>
        <end position="1147"/>
    </location>
</feature>
<feature type="region of interest" description="Disordered" evidence="11">
    <location>
        <begin position="1153"/>
        <end position="1172"/>
    </location>
</feature>
<feature type="region of interest" description="Disordered" evidence="11">
    <location>
        <begin position="1885"/>
        <end position="1915"/>
    </location>
</feature>
<feature type="coiled-coil region" evidence="7">
    <location>
        <begin position="843"/>
        <end position="1939"/>
    </location>
</feature>
<feature type="compositionally biased region" description="Basic and acidic residues" evidence="11">
    <location>
        <begin position="1128"/>
        <end position="1147"/>
    </location>
</feature>
<feature type="binding site" evidence="7">
    <location>
        <begin position="179"/>
        <end position="186"/>
    </location>
    <ligand>
        <name>ATP</name>
        <dbReference type="ChEBI" id="CHEBI:30616"/>
    </ligand>
</feature>
<feature type="modified residue" description="Phosphothreonine" evidence="5">
    <location>
        <position position="64"/>
    </location>
</feature>
<feature type="modified residue" description="Phosphothreonine" evidence="5">
    <location>
        <position position="69"/>
    </location>
</feature>
<feature type="modified residue" description="N6,N6,N6-trimethyllysine" evidence="7">
    <location>
        <position position="130"/>
    </location>
</feature>
<feature type="modified residue" description="Phosphotyrosine" evidence="5">
    <location>
        <position position="389"/>
    </location>
</feature>
<feature type="modified residue" description="Phosphoserine" evidence="5">
    <location>
        <position position="392"/>
    </location>
</feature>
<feature type="modified residue" description="Phosphothreonine" evidence="5">
    <location>
        <position position="419"/>
    </location>
</feature>
<feature type="modified residue" description="Phosphoserine" evidence="5">
    <location>
        <position position="625"/>
    </location>
</feature>
<feature type="modified residue" description="Pros-methylhistidine" evidence="4">
    <location>
        <position position="757"/>
    </location>
</feature>
<feature type="modified residue" description="Phosphoserine" evidence="5">
    <location>
        <position position="1092"/>
    </location>
</feature>
<feature type="modified residue" description="Phosphoserine" evidence="5">
    <location>
        <position position="1096"/>
    </location>
</feature>
<feature type="modified residue" description="Phosphoserine" evidence="5">
    <location>
        <position position="1162"/>
    </location>
</feature>
<feature type="modified residue" description="Phosphoserine" evidence="5">
    <location>
        <position position="1237"/>
    </location>
</feature>
<feature type="modified residue" description="Phosphothreonine" evidence="5">
    <location>
        <position position="1241"/>
    </location>
</feature>
<feature type="modified residue" description="Phosphoserine" evidence="5">
    <location>
        <position position="1243"/>
    </location>
</feature>
<feature type="modified residue" description="Phosphothreonine" evidence="5">
    <location>
        <position position="1255"/>
    </location>
</feature>
<feature type="modified residue" description="Phosphoserine" evidence="5">
    <location>
        <position position="1261"/>
    </location>
</feature>
<feature type="modified residue" description="Phosphothreonine" evidence="5">
    <location>
        <position position="1286"/>
    </location>
</feature>
<feature type="modified residue" description="Phosphoserine" evidence="5">
    <location>
        <position position="1288"/>
    </location>
</feature>
<feature type="modified residue" description="Phosphoserine" evidence="5">
    <location>
        <position position="1292"/>
    </location>
</feature>
<feature type="modified residue" description="Phosphoserine" evidence="5">
    <location>
        <position position="1303"/>
    </location>
</feature>
<feature type="modified residue" description="Phosphoserine" evidence="5">
    <location>
        <position position="1306"/>
    </location>
</feature>
<feature type="modified residue" description="Phosphotyrosine" evidence="5">
    <location>
        <position position="1464"/>
    </location>
</feature>
<feature type="modified residue" description="Phosphothreonine" evidence="5">
    <location>
        <position position="1467"/>
    </location>
</feature>
<feature type="modified residue" description="Phosphoserine" evidence="5">
    <location>
        <position position="1474"/>
    </location>
</feature>
<feature type="modified residue" description="Phosphotyrosine" evidence="5">
    <location>
        <position position="1492"/>
    </location>
</feature>
<feature type="modified residue" description="Phosphoserine" evidence="5">
    <location>
        <position position="1495"/>
    </location>
</feature>
<feature type="modified residue" description="Phosphothreonine" evidence="5">
    <location>
        <position position="1501"/>
    </location>
</feature>
<feature type="modified residue" description="Phosphoserine" evidence="5">
    <location>
        <position position="1514"/>
    </location>
</feature>
<feature type="modified residue" description="Phosphothreonine" evidence="5">
    <location>
        <position position="1517"/>
    </location>
</feature>
<feature type="modified residue" description="Phosphoserine" evidence="5">
    <location>
        <position position="1542"/>
    </location>
</feature>
<feature type="modified residue" description="Phosphoserine" evidence="5">
    <location>
        <position position="1554"/>
    </location>
</feature>
<feature type="modified residue" description="Phosphoserine" evidence="5">
    <location>
        <position position="1574"/>
    </location>
</feature>
<feature type="modified residue" description="Phosphoserine" evidence="5">
    <location>
        <position position="1600"/>
    </location>
</feature>
<feature type="modified residue" description="Phosphoserine" evidence="5">
    <location>
        <position position="1603"/>
    </location>
</feature>
<feature type="modified residue" description="Phosphoserine" evidence="5">
    <location>
        <position position="1714"/>
    </location>
</feature>
<feature type="modified residue" description="Phosphoserine" evidence="5">
    <location>
        <position position="1726"/>
    </location>
</feature>
<feature type="modified residue" description="Phosphothreonine" evidence="5">
    <location>
        <position position="1730"/>
    </location>
</feature>
<feature type="modified residue" description="Phosphothreonine" evidence="5">
    <location>
        <position position="1736"/>
    </location>
</feature>
<feature type="modified residue" description="Phosphoserine" evidence="5">
    <location>
        <position position="1739"/>
    </location>
</feature>
<name>MYH2_PIG</name>
<reference key="1">
    <citation type="journal article" date="2001" name="Meat Sci.">
        <title>Differences in molecular structure among the porcine myosin heavy chain-2a, -2x, and -2b isoforms.</title>
        <authorList>
            <person name="Chikuni K."/>
            <person name="Tanabe R."/>
            <person name="Muroya S."/>
            <person name="Nakajima I."/>
        </authorList>
        <dbReference type="AGRICOLA" id="IND22089526"/>
    </citation>
    <scope>NUCLEOTIDE SEQUENCE [MRNA]</scope>
    <source>
        <strain>Landrace</strain>
        <tissue>Skeletal muscle</tissue>
    </source>
</reference>
<keyword id="KW-0009">Actin-binding</keyword>
<keyword id="KW-0067">ATP-binding</keyword>
<keyword id="KW-0112">Calmodulin-binding</keyword>
<keyword id="KW-0175">Coiled coil</keyword>
<keyword id="KW-0963">Cytoplasm</keyword>
<keyword id="KW-0488">Methylation</keyword>
<keyword id="KW-0505">Motor protein</keyword>
<keyword id="KW-0514">Muscle protein</keyword>
<keyword id="KW-0518">Myosin</keyword>
<keyword id="KW-0547">Nucleotide-binding</keyword>
<keyword id="KW-0597">Phosphoprotein</keyword>
<keyword id="KW-1185">Reference proteome</keyword>
<keyword id="KW-0787">Thick filament</keyword>
<evidence type="ECO:0000250" key="1"/>
<evidence type="ECO:0000250" key="2">
    <source>
        <dbReference type="UniProtKB" id="G3UW82"/>
    </source>
</evidence>
<evidence type="ECO:0000250" key="3">
    <source>
        <dbReference type="UniProtKB" id="P12883"/>
    </source>
</evidence>
<evidence type="ECO:0000250" key="4">
    <source>
        <dbReference type="UniProtKB" id="Q28641"/>
    </source>
</evidence>
<evidence type="ECO:0000250" key="5">
    <source>
        <dbReference type="UniProtKB" id="Q29RW1"/>
    </source>
</evidence>
<evidence type="ECO:0000250" key="6">
    <source>
        <dbReference type="UniProtKB" id="Q9UKX2"/>
    </source>
</evidence>
<evidence type="ECO:0000255" key="7"/>
<evidence type="ECO:0000255" key="8">
    <source>
        <dbReference type="PROSITE-ProRule" id="PRU00116"/>
    </source>
</evidence>
<evidence type="ECO:0000255" key="9">
    <source>
        <dbReference type="PROSITE-ProRule" id="PRU00782"/>
    </source>
</evidence>
<evidence type="ECO:0000255" key="10">
    <source>
        <dbReference type="PROSITE-ProRule" id="PRU01190"/>
    </source>
</evidence>
<evidence type="ECO:0000256" key="11">
    <source>
        <dbReference type="SAM" id="MobiDB-lite"/>
    </source>
</evidence>
<evidence type="ECO:0000305" key="12"/>
<sequence length="1939" mass="223150">MSSDQEMAIFGEAAPYLRKSEKERIEAQNRPFDAKTSVFVAEPKESFVKGTIQSREGGKVTVKTEAGATLTVKEDQVFPMNPPKFDKIEDMAMMTHLHEPGVLYNLKERYAAWMIYTYSGLFCVTVNPYKWLPVYNPEVVTAYRGKKRQEAPPHIFSISDNAYQFMLTDRENQSILITGESGAGKTVNTKRVIQYFATIAVTGEKKKEEPTSGKMQGTLEDQIISANPLLEAFGNAKTVRNDNSSRFGKFIRIHFGTTGKLASADIETYLLEKSRVTFQLKAERSYHIFYQITSNRKPELIEMLLITTNPYDYPFISQGEISVASIDDQEELIATDSAIDILGFTNEEKVSIYKLTGAVMHYGNLKFKQKQREEQAEPDGTEVADKAAYLQSLNSADLLKALCYPRVKVGNEYVTKGQTVEQVTNAVGALAKAVYEKMFLWMVTRINQQLDTKQPRQYFIGVLDIAGFEIFDFNSLEQLCINFTNEKLQQFFNHHMFVLEQEEYKREGIEWTFIDFGMDLAACIELIEKPMGIFSILEEECMFPKATDTSFKNKLYEQHLGKSANFQKPKPAKGKVEAHFSLIHYAGTVDYNITGWLDKNKDPLNDTVVGLYQKSALKTLAFLFSGAQTGEAEAGGTKKGGKKKGSSFQTVSALFRENLNKLMTNLRSTHPHFVRCIIPNETKTPGAMEHELVLHQLRCNGVLEGIRICRKGFPSRILYADFKQRYKVLNASAIPEGQYIDSKKASEKLLASIDIDHTQYKFGHTKVFFKAGLLGLLEEMRDDKLAQLITRTQARCRGFLARVEYQKMVERRESIFCIQYNIRAFMNVKHWPWMKLFFKIKPLLKSAESEKEMATMKEEFQKTKDELAKSEAKRKELEEKMVTLLKEKNDLQLQVQAEAEGLADAEERCDQLIKTKIQLEAKIKEVTERAEDEEEINAELTAKKRKLEDECSELKKDIDDLELTLAKVEKEKHATENKVKNLTEEMAGLDETIAKLTKEKKALQEAHQQTLDDLQAEEDKVNTLTKAKTKLEQQVDDLEGSLEQEKKLRMDLERAKRKLEGDLKLAQESIMDIENEKQQLDEKLKKKEFEISNLQSKIEDEQALAIQLQKKIKELQARIEELEEEIEAERASRAKAEKQRSDLSRELEEISERLEEAGGATSAQIEMNKKREAEFQKMRRDLEEATLQHEATAAALRKKHADSVAELGEQIDNLQRVKQKLEKEKSEMKMEIDDLASNMETVSKAKGNLEKMCRTLEDQLSELKSKEEEQQRLINDLTAQRGRLQTESGEFSRQLDEKEALVSQLSRGKQAYTQQIEELKRQLEEEIKAKNALAHALQSSRHDCDLLREQYEEEQESKAELQRALSKANTEVAQWRTKYETDAIQRTEELEEAKKKLAQRLQAAEEHVEAVNAKCASLEKTKQRLQNEVEDLMLDVERTNAACAALDKKQRNFDKILAEWKQKYEETHAELEASQKEARSLGTELFKMKNAYEESLDQLETLKRENKNLQQEISDLTEQIAEGGKRIHELEKIKKQVEQEKSEIQAALEEAEASLEHEEGKILRIQLELNQVKSEVDRKIAEKDEEIDQLKRNHVRVVESMQSMLDAEIRSRNDAIRLKKKMEGDLNEMEIQLNHANRMAAEALRNYRNTQGILKDTQIHLDDALRGQEDLKEQLAMVERRANLLQAEIEELRATLEQTERSRKVAEQELLDASERVQLLHTQNTSLINTKKKLETDISQMQGEMEDILQEARNAEEKAKKAITDAAMMAEELKKEQDTSAHLERMKKNMEQTVKDLQHRLDEAEQLALKGGKKQIQKLEARVRELEGEVESEQKRNAEAVKGLRKHERRVKELTYQTEEDRKNILRLQDLVDKLQAKVKSYKRQAEEAEEQSNTNLSKFRKLQHELEEAEERADIAESQVNKLRVKSREVHTKVISEE</sequence>
<accession>Q9TV63</accession>
<protein>
    <recommendedName>
        <fullName>Myosin-2</fullName>
    </recommendedName>
    <alternativeName>
        <fullName>Myosin heavy chain 2</fullName>
    </alternativeName>
    <alternativeName>
        <fullName>Myosin heavy chain 2a</fullName>
        <shortName>MyHC-2a</shortName>
    </alternativeName>
    <alternativeName>
        <fullName>Myosin heavy chain, skeletal muscle, adult 2</fullName>
    </alternativeName>
</protein>